<name>GLMM_PROM3</name>
<dbReference type="EC" id="5.4.2.10" evidence="1"/>
<dbReference type="EMBL" id="CP000554">
    <property type="protein sequence ID" value="ABM79173.1"/>
    <property type="molecule type" value="Genomic_DNA"/>
</dbReference>
<dbReference type="RefSeq" id="WP_011827027.1">
    <property type="nucleotide sequence ID" value="NC_008820.1"/>
</dbReference>
<dbReference type="SMR" id="A2CCG3"/>
<dbReference type="STRING" id="59922.P9303_24421"/>
<dbReference type="KEGG" id="pmf:P9303_24421"/>
<dbReference type="HOGENOM" id="CLU_016950_7_0_3"/>
<dbReference type="BioCyc" id="PMAR59922:G1G80-2137-MONOMER"/>
<dbReference type="Proteomes" id="UP000002274">
    <property type="component" value="Chromosome"/>
</dbReference>
<dbReference type="GO" id="GO:0005829">
    <property type="term" value="C:cytosol"/>
    <property type="evidence" value="ECO:0007669"/>
    <property type="project" value="TreeGrafter"/>
</dbReference>
<dbReference type="GO" id="GO:0000287">
    <property type="term" value="F:magnesium ion binding"/>
    <property type="evidence" value="ECO:0007669"/>
    <property type="project" value="UniProtKB-UniRule"/>
</dbReference>
<dbReference type="GO" id="GO:0008966">
    <property type="term" value="F:phosphoglucosamine mutase activity"/>
    <property type="evidence" value="ECO:0007669"/>
    <property type="project" value="UniProtKB-UniRule"/>
</dbReference>
<dbReference type="GO" id="GO:0004615">
    <property type="term" value="F:phosphomannomutase activity"/>
    <property type="evidence" value="ECO:0007669"/>
    <property type="project" value="TreeGrafter"/>
</dbReference>
<dbReference type="GO" id="GO:0005975">
    <property type="term" value="P:carbohydrate metabolic process"/>
    <property type="evidence" value="ECO:0007669"/>
    <property type="project" value="InterPro"/>
</dbReference>
<dbReference type="GO" id="GO:0009252">
    <property type="term" value="P:peptidoglycan biosynthetic process"/>
    <property type="evidence" value="ECO:0007669"/>
    <property type="project" value="TreeGrafter"/>
</dbReference>
<dbReference type="GO" id="GO:0006048">
    <property type="term" value="P:UDP-N-acetylglucosamine biosynthetic process"/>
    <property type="evidence" value="ECO:0007669"/>
    <property type="project" value="TreeGrafter"/>
</dbReference>
<dbReference type="CDD" id="cd05802">
    <property type="entry name" value="GlmM"/>
    <property type="match status" value="1"/>
</dbReference>
<dbReference type="FunFam" id="3.40.120.10:FF:000002">
    <property type="entry name" value="Phosphoglucosamine mutase"/>
    <property type="match status" value="1"/>
</dbReference>
<dbReference type="Gene3D" id="3.40.120.10">
    <property type="entry name" value="Alpha-D-Glucose-1,6-Bisphosphate, subunit A, domain 3"/>
    <property type="match status" value="3"/>
</dbReference>
<dbReference type="Gene3D" id="3.30.310.50">
    <property type="entry name" value="Alpha-D-phosphohexomutase, C-terminal domain"/>
    <property type="match status" value="1"/>
</dbReference>
<dbReference type="HAMAP" id="MF_01554_B">
    <property type="entry name" value="GlmM_B"/>
    <property type="match status" value="1"/>
</dbReference>
<dbReference type="InterPro" id="IPR005844">
    <property type="entry name" value="A-D-PHexomutase_a/b/a-I"/>
</dbReference>
<dbReference type="InterPro" id="IPR016055">
    <property type="entry name" value="A-D-PHexomutase_a/b/a-I/II/III"/>
</dbReference>
<dbReference type="InterPro" id="IPR005845">
    <property type="entry name" value="A-D-PHexomutase_a/b/a-II"/>
</dbReference>
<dbReference type="InterPro" id="IPR005846">
    <property type="entry name" value="A-D-PHexomutase_a/b/a-III"/>
</dbReference>
<dbReference type="InterPro" id="IPR005843">
    <property type="entry name" value="A-D-PHexomutase_C"/>
</dbReference>
<dbReference type="InterPro" id="IPR036900">
    <property type="entry name" value="A-D-PHexomutase_C_sf"/>
</dbReference>
<dbReference type="InterPro" id="IPR016066">
    <property type="entry name" value="A-D-PHexomutase_CS"/>
</dbReference>
<dbReference type="InterPro" id="IPR005841">
    <property type="entry name" value="Alpha-D-phosphohexomutase_SF"/>
</dbReference>
<dbReference type="InterPro" id="IPR006352">
    <property type="entry name" value="GlmM_bact"/>
</dbReference>
<dbReference type="InterPro" id="IPR050060">
    <property type="entry name" value="Phosphoglucosamine_mutase"/>
</dbReference>
<dbReference type="NCBIfam" id="TIGR01455">
    <property type="entry name" value="glmM"/>
    <property type="match status" value="1"/>
</dbReference>
<dbReference type="PANTHER" id="PTHR42946:SF1">
    <property type="entry name" value="PHOSPHOGLUCOMUTASE (ALPHA-D-GLUCOSE-1,6-BISPHOSPHATE-DEPENDENT)"/>
    <property type="match status" value="1"/>
</dbReference>
<dbReference type="PANTHER" id="PTHR42946">
    <property type="entry name" value="PHOSPHOHEXOSE MUTASE"/>
    <property type="match status" value="1"/>
</dbReference>
<dbReference type="Pfam" id="PF02878">
    <property type="entry name" value="PGM_PMM_I"/>
    <property type="match status" value="1"/>
</dbReference>
<dbReference type="Pfam" id="PF02879">
    <property type="entry name" value="PGM_PMM_II"/>
    <property type="match status" value="1"/>
</dbReference>
<dbReference type="Pfam" id="PF02880">
    <property type="entry name" value="PGM_PMM_III"/>
    <property type="match status" value="1"/>
</dbReference>
<dbReference type="Pfam" id="PF00408">
    <property type="entry name" value="PGM_PMM_IV"/>
    <property type="match status" value="1"/>
</dbReference>
<dbReference type="PRINTS" id="PR00509">
    <property type="entry name" value="PGMPMM"/>
</dbReference>
<dbReference type="SUPFAM" id="SSF55957">
    <property type="entry name" value="Phosphoglucomutase, C-terminal domain"/>
    <property type="match status" value="1"/>
</dbReference>
<dbReference type="SUPFAM" id="SSF53738">
    <property type="entry name" value="Phosphoglucomutase, first 3 domains"/>
    <property type="match status" value="3"/>
</dbReference>
<dbReference type="PROSITE" id="PS00710">
    <property type="entry name" value="PGM_PMM"/>
    <property type="match status" value="1"/>
</dbReference>
<proteinExistence type="inferred from homology"/>
<feature type="chain" id="PRO_0000301356" description="Phosphoglucosamine mutase">
    <location>
        <begin position="1"/>
        <end position="468"/>
    </location>
</feature>
<feature type="active site" description="Phosphoserine intermediate" evidence="1">
    <location>
        <position position="112"/>
    </location>
</feature>
<feature type="binding site" description="via phosphate group" evidence="1">
    <location>
        <position position="112"/>
    </location>
    <ligand>
        <name>Mg(2+)</name>
        <dbReference type="ChEBI" id="CHEBI:18420"/>
    </ligand>
</feature>
<feature type="binding site" evidence="1">
    <location>
        <position position="254"/>
    </location>
    <ligand>
        <name>Mg(2+)</name>
        <dbReference type="ChEBI" id="CHEBI:18420"/>
    </ligand>
</feature>
<feature type="binding site" evidence="1">
    <location>
        <position position="256"/>
    </location>
    <ligand>
        <name>Mg(2+)</name>
        <dbReference type="ChEBI" id="CHEBI:18420"/>
    </ligand>
</feature>
<feature type="binding site" evidence="1">
    <location>
        <position position="258"/>
    </location>
    <ligand>
        <name>Mg(2+)</name>
        <dbReference type="ChEBI" id="CHEBI:18420"/>
    </ligand>
</feature>
<feature type="modified residue" description="Phosphoserine" evidence="1">
    <location>
        <position position="112"/>
    </location>
</feature>
<protein>
    <recommendedName>
        <fullName evidence="1">Phosphoglucosamine mutase</fullName>
        <ecNumber evidence="1">5.4.2.10</ecNumber>
    </recommendedName>
</protein>
<gene>
    <name evidence="1" type="primary">glmM</name>
    <name type="ordered locus">P9303_24421</name>
</gene>
<evidence type="ECO:0000255" key="1">
    <source>
        <dbReference type="HAMAP-Rule" id="MF_01554"/>
    </source>
</evidence>
<accession>A2CCG3</accession>
<organism>
    <name type="scientific">Prochlorococcus marinus (strain MIT 9303)</name>
    <dbReference type="NCBI Taxonomy" id="59922"/>
    <lineage>
        <taxon>Bacteria</taxon>
        <taxon>Bacillati</taxon>
        <taxon>Cyanobacteriota</taxon>
        <taxon>Cyanophyceae</taxon>
        <taxon>Synechococcales</taxon>
        <taxon>Prochlorococcaceae</taxon>
        <taxon>Prochlorococcus</taxon>
    </lineage>
</organism>
<keyword id="KW-0413">Isomerase</keyword>
<keyword id="KW-0460">Magnesium</keyword>
<keyword id="KW-0479">Metal-binding</keyword>
<keyword id="KW-0597">Phosphoprotein</keyword>
<reference key="1">
    <citation type="journal article" date="2007" name="PLoS Genet.">
        <title>Patterns and implications of gene gain and loss in the evolution of Prochlorococcus.</title>
        <authorList>
            <person name="Kettler G.C."/>
            <person name="Martiny A.C."/>
            <person name="Huang K."/>
            <person name="Zucker J."/>
            <person name="Coleman M.L."/>
            <person name="Rodrigue S."/>
            <person name="Chen F."/>
            <person name="Lapidus A."/>
            <person name="Ferriera S."/>
            <person name="Johnson J."/>
            <person name="Steglich C."/>
            <person name="Church G.M."/>
            <person name="Richardson P."/>
            <person name="Chisholm S.W."/>
        </authorList>
    </citation>
    <scope>NUCLEOTIDE SEQUENCE [LARGE SCALE GENOMIC DNA]</scope>
    <source>
        <strain>MIT 9303</strain>
    </source>
</reference>
<comment type="function">
    <text evidence="1">Catalyzes the conversion of glucosamine-6-phosphate to glucosamine-1-phosphate.</text>
</comment>
<comment type="catalytic activity">
    <reaction evidence="1">
        <text>alpha-D-glucosamine 1-phosphate = D-glucosamine 6-phosphate</text>
        <dbReference type="Rhea" id="RHEA:23424"/>
        <dbReference type="ChEBI" id="CHEBI:58516"/>
        <dbReference type="ChEBI" id="CHEBI:58725"/>
        <dbReference type="EC" id="5.4.2.10"/>
    </reaction>
</comment>
<comment type="cofactor">
    <cofactor evidence="1">
        <name>Mg(2+)</name>
        <dbReference type="ChEBI" id="CHEBI:18420"/>
    </cofactor>
    <text evidence="1">Binds 1 Mg(2+) ion per subunit.</text>
</comment>
<comment type="PTM">
    <text evidence="1">Activated by phosphorylation.</text>
</comment>
<comment type="similarity">
    <text evidence="1">Belongs to the phosphohexose mutase family.</text>
</comment>
<sequence length="468" mass="49167">MVFTALDPLGVPLGTAQASFGTDGIRGRVGTLLTPAFILQVGYWCGQVLPDQGPVLIGMDSRSSGAMVASALTAGLTAAGREVWTLGLCPTPAVPGLIRKLGAAGGLMVSASHNPPEDNGIKVFGADGAKLSPAKQGLIEAGLRGEAIGDKGRPTITSCGPAYQRDELLSHYRDALLASVLHQRLDGVPIVLDLCWGAATACGAEVFAALGADLTVLHGEPDGSRINVGCGSTQLEPLRRAVIERGAIMGFAFDGDADRMLALDGQGRVVDGDHVLYLWGSDLQDQQALPQQRLVATVMSNLGFERAWQQRGGVLERTPVGDQHVYAAMVESNAALGGEQSGHILSAAHGLCGDGVLTALQLATLCHGRGLSLGEWLDQSFQAFPQKLVNVRVPDLERRMGWQHCEPLQEAVLAAEAAMGEDGRVLVRASGTEPLLRVMIEASDSAAVEFWTVQLADLAEQHLNRGCV</sequence>